<name>TRUA_STAAN</name>
<proteinExistence type="inferred from homology"/>
<feature type="chain" id="PRO_0000057451" description="tRNA pseudouridine synthase A">
    <location>
        <begin position="1"/>
        <end position="267"/>
    </location>
</feature>
<feature type="active site" description="Nucleophile" evidence="1">
    <location>
        <position position="51"/>
    </location>
</feature>
<feature type="binding site" evidence="1">
    <location>
        <position position="109"/>
    </location>
    <ligand>
        <name>substrate</name>
    </ligand>
</feature>
<accession>P65849</accession>
<accession>Q99S50</accession>
<comment type="function">
    <text evidence="1">Formation of pseudouridine at positions 38, 39 and 40 in the anticodon stem and loop of transfer RNAs.</text>
</comment>
<comment type="catalytic activity">
    <reaction evidence="1">
        <text>uridine(38/39/40) in tRNA = pseudouridine(38/39/40) in tRNA</text>
        <dbReference type="Rhea" id="RHEA:22376"/>
        <dbReference type="Rhea" id="RHEA-COMP:10085"/>
        <dbReference type="Rhea" id="RHEA-COMP:10087"/>
        <dbReference type="ChEBI" id="CHEBI:65314"/>
        <dbReference type="ChEBI" id="CHEBI:65315"/>
        <dbReference type="EC" id="5.4.99.12"/>
    </reaction>
</comment>
<comment type="subunit">
    <text evidence="1">Homodimer.</text>
</comment>
<comment type="similarity">
    <text evidence="1">Belongs to the tRNA pseudouridine synthase TruA family.</text>
</comment>
<keyword id="KW-0413">Isomerase</keyword>
<keyword id="KW-0819">tRNA processing</keyword>
<protein>
    <recommendedName>
        <fullName evidence="1">tRNA pseudouridine synthase A</fullName>
        <ecNumber evidence="1">5.4.99.12</ecNumber>
    </recommendedName>
    <alternativeName>
        <fullName evidence="1">tRNA pseudouridine(38-40) synthase</fullName>
    </alternativeName>
    <alternativeName>
        <fullName evidence="1">tRNA pseudouridylate synthase I</fullName>
    </alternativeName>
    <alternativeName>
        <fullName evidence="1">tRNA-uridine isomerase I</fullName>
    </alternativeName>
</protein>
<evidence type="ECO:0000255" key="1">
    <source>
        <dbReference type="HAMAP-Rule" id="MF_00171"/>
    </source>
</evidence>
<organism>
    <name type="scientific">Staphylococcus aureus (strain N315)</name>
    <dbReference type="NCBI Taxonomy" id="158879"/>
    <lineage>
        <taxon>Bacteria</taxon>
        <taxon>Bacillati</taxon>
        <taxon>Bacillota</taxon>
        <taxon>Bacilli</taxon>
        <taxon>Bacillales</taxon>
        <taxon>Staphylococcaceae</taxon>
        <taxon>Staphylococcus</taxon>
    </lineage>
</organism>
<sequence>MRILVEIAYQGNNFLGFQIQQNGRTVQQQFEKLLQRMHKRHVRIHPSSRTDRGVHAIQQYFHFDTELNIPMSQWQYAMNRTLPDDIYVNNVVTVDDDFHCRYDCVGKRYRYKVYQAQHRDPFQSGLKTFIPETLDLDKMNRAAQQFIGTHDFTGFCSQKTEVESKVRTLYQSEIVKTDDGFDYIVTGSGFLYNMVRVLVAFLIEVGKGRHEISDVPKLLESKNRKNVPFTAPAEGLYLEKIYLDENELLKDFGNDIKIHRKKSLQND</sequence>
<dbReference type="EC" id="5.4.99.12" evidence="1"/>
<dbReference type="EMBL" id="BA000018">
    <property type="protein sequence ID" value="BAB43311.1"/>
    <property type="molecule type" value="Genomic_DNA"/>
</dbReference>
<dbReference type="PIR" id="F90018">
    <property type="entry name" value="F90018"/>
</dbReference>
<dbReference type="RefSeq" id="WP_001221853.1">
    <property type="nucleotide sequence ID" value="NC_002745.2"/>
</dbReference>
<dbReference type="SMR" id="P65849"/>
<dbReference type="EnsemblBacteria" id="BAB43311">
    <property type="protein sequence ID" value="BAB43311"/>
    <property type="gene ID" value="BAB43311"/>
</dbReference>
<dbReference type="KEGG" id="sau:SA2018"/>
<dbReference type="HOGENOM" id="CLU_014673_0_1_9"/>
<dbReference type="GO" id="GO:0003723">
    <property type="term" value="F:RNA binding"/>
    <property type="evidence" value="ECO:0007669"/>
    <property type="project" value="InterPro"/>
</dbReference>
<dbReference type="GO" id="GO:0160147">
    <property type="term" value="F:tRNA pseudouridine(38-40) synthase activity"/>
    <property type="evidence" value="ECO:0007669"/>
    <property type="project" value="UniProtKB-EC"/>
</dbReference>
<dbReference type="GO" id="GO:0031119">
    <property type="term" value="P:tRNA pseudouridine synthesis"/>
    <property type="evidence" value="ECO:0007669"/>
    <property type="project" value="UniProtKB-UniRule"/>
</dbReference>
<dbReference type="CDD" id="cd02570">
    <property type="entry name" value="PseudoU_synth_EcTruA"/>
    <property type="match status" value="1"/>
</dbReference>
<dbReference type="FunFam" id="3.30.70.580:FF:000001">
    <property type="entry name" value="tRNA pseudouridine synthase A"/>
    <property type="match status" value="1"/>
</dbReference>
<dbReference type="Gene3D" id="3.30.70.660">
    <property type="entry name" value="Pseudouridine synthase I, catalytic domain, C-terminal subdomain"/>
    <property type="match status" value="1"/>
</dbReference>
<dbReference type="Gene3D" id="3.30.70.580">
    <property type="entry name" value="Pseudouridine synthase I, catalytic domain, N-terminal subdomain"/>
    <property type="match status" value="1"/>
</dbReference>
<dbReference type="HAMAP" id="MF_00171">
    <property type="entry name" value="TruA"/>
    <property type="match status" value="1"/>
</dbReference>
<dbReference type="InterPro" id="IPR020103">
    <property type="entry name" value="PsdUridine_synth_cat_dom_sf"/>
</dbReference>
<dbReference type="InterPro" id="IPR001406">
    <property type="entry name" value="PsdUridine_synth_TruA"/>
</dbReference>
<dbReference type="InterPro" id="IPR020097">
    <property type="entry name" value="PsdUridine_synth_TruA_a/b_dom"/>
</dbReference>
<dbReference type="InterPro" id="IPR020095">
    <property type="entry name" value="PsdUridine_synth_TruA_C"/>
</dbReference>
<dbReference type="InterPro" id="IPR020094">
    <property type="entry name" value="TruA/RsuA/RluB/E/F_N"/>
</dbReference>
<dbReference type="NCBIfam" id="TIGR00071">
    <property type="entry name" value="hisT_truA"/>
    <property type="match status" value="1"/>
</dbReference>
<dbReference type="PANTHER" id="PTHR11142">
    <property type="entry name" value="PSEUDOURIDYLATE SYNTHASE"/>
    <property type="match status" value="1"/>
</dbReference>
<dbReference type="PANTHER" id="PTHR11142:SF0">
    <property type="entry name" value="TRNA PSEUDOURIDINE SYNTHASE-LIKE 1"/>
    <property type="match status" value="1"/>
</dbReference>
<dbReference type="Pfam" id="PF01416">
    <property type="entry name" value="PseudoU_synth_1"/>
    <property type="match status" value="2"/>
</dbReference>
<dbReference type="PIRSF" id="PIRSF001430">
    <property type="entry name" value="tRNA_psdUrid_synth"/>
    <property type="match status" value="1"/>
</dbReference>
<dbReference type="SUPFAM" id="SSF55120">
    <property type="entry name" value="Pseudouridine synthase"/>
    <property type="match status" value="1"/>
</dbReference>
<gene>
    <name evidence="1" type="primary">truA</name>
    <name type="ordered locus">SA2018</name>
</gene>
<reference key="1">
    <citation type="journal article" date="2001" name="Lancet">
        <title>Whole genome sequencing of meticillin-resistant Staphylococcus aureus.</title>
        <authorList>
            <person name="Kuroda M."/>
            <person name="Ohta T."/>
            <person name="Uchiyama I."/>
            <person name="Baba T."/>
            <person name="Yuzawa H."/>
            <person name="Kobayashi I."/>
            <person name="Cui L."/>
            <person name="Oguchi A."/>
            <person name="Aoki K."/>
            <person name="Nagai Y."/>
            <person name="Lian J.-Q."/>
            <person name="Ito T."/>
            <person name="Kanamori M."/>
            <person name="Matsumaru H."/>
            <person name="Maruyama A."/>
            <person name="Murakami H."/>
            <person name="Hosoyama A."/>
            <person name="Mizutani-Ui Y."/>
            <person name="Takahashi N.K."/>
            <person name="Sawano T."/>
            <person name="Inoue R."/>
            <person name="Kaito C."/>
            <person name="Sekimizu K."/>
            <person name="Hirakawa H."/>
            <person name="Kuhara S."/>
            <person name="Goto S."/>
            <person name="Yabuzaki J."/>
            <person name="Kanehisa M."/>
            <person name="Yamashita A."/>
            <person name="Oshima K."/>
            <person name="Furuya K."/>
            <person name="Yoshino C."/>
            <person name="Shiba T."/>
            <person name="Hattori M."/>
            <person name="Ogasawara N."/>
            <person name="Hayashi H."/>
            <person name="Hiramatsu K."/>
        </authorList>
    </citation>
    <scope>NUCLEOTIDE SEQUENCE [LARGE SCALE GENOMIC DNA]</scope>
    <source>
        <strain>N315</strain>
    </source>
</reference>